<dbReference type="EC" id="2.7.7.6" evidence="1"/>
<dbReference type="EMBL" id="AE009441">
    <property type="protein sequence ID" value="AAL62933.1"/>
    <property type="molecule type" value="Genomic_DNA"/>
</dbReference>
<dbReference type="RefSeq" id="WP_011007405.1">
    <property type="nucleotide sequence ID" value="NC_003364.1"/>
</dbReference>
<dbReference type="SMR" id="Q8ZYR0"/>
<dbReference type="FunCoup" id="Q8ZYR0">
    <property type="interactions" value="8"/>
</dbReference>
<dbReference type="STRING" id="178306.PAE0664"/>
<dbReference type="EnsemblBacteria" id="AAL62933">
    <property type="protein sequence ID" value="AAL62933"/>
    <property type="gene ID" value="PAE0664"/>
</dbReference>
<dbReference type="GeneID" id="1465158"/>
<dbReference type="KEGG" id="pai:PAE0664"/>
<dbReference type="PATRIC" id="fig|178306.9.peg.478"/>
<dbReference type="eggNOG" id="arCOG04258">
    <property type="taxonomic scope" value="Archaea"/>
</dbReference>
<dbReference type="HOGENOM" id="CLU_058320_4_0_2"/>
<dbReference type="InParanoid" id="Q8ZYR0"/>
<dbReference type="Proteomes" id="UP000002439">
    <property type="component" value="Chromosome"/>
</dbReference>
<dbReference type="GO" id="GO:0005737">
    <property type="term" value="C:cytoplasm"/>
    <property type="evidence" value="ECO:0007669"/>
    <property type="project" value="UniProtKB-SubCell"/>
</dbReference>
<dbReference type="GO" id="GO:0000428">
    <property type="term" value="C:DNA-directed RNA polymerase complex"/>
    <property type="evidence" value="ECO:0007669"/>
    <property type="project" value="UniProtKB-KW"/>
</dbReference>
<dbReference type="GO" id="GO:0003677">
    <property type="term" value="F:DNA binding"/>
    <property type="evidence" value="ECO:0007669"/>
    <property type="project" value="InterPro"/>
</dbReference>
<dbReference type="GO" id="GO:0003899">
    <property type="term" value="F:DNA-directed RNA polymerase activity"/>
    <property type="evidence" value="ECO:0007669"/>
    <property type="project" value="UniProtKB-UniRule"/>
</dbReference>
<dbReference type="GO" id="GO:0006351">
    <property type="term" value="P:DNA-templated transcription"/>
    <property type="evidence" value="ECO:0007669"/>
    <property type="project" value="UniProtKB-UniRule"/>
</dbReference>
<dbReference type="Gene3D" id="3.90.940.20">
    <property type="entry name" value="RPB5-like RNA polymerase subunit"/>
    <property type="match status" value="1"/>
</dbReference>
<dbReference type="HAMAP" id="MF_00025">
    <property type="entry name" value="RNApol_Rpo5_RPB5"/>
    <property type="match status" value="1"/>
</dbReference>
<dbReference type="InterPro" id="IPR014381">
    <property type="entry name" value="Arch_Rpo5/euc_Rpb5"/>
</dbReference>
<dbReference type="InterPro" id="IPR000783">
    <property type="entry name" value="RNA_pol_subH/Rpb5_C"/>
</dbReference>
<dbReference type="InterPro" id="IPR035913">
    <property type="entry name" value="RPB5-like_sf"/>
</dbReference>
<dbReference type="NCBIfam" id="NF007129">
    <property type="entry name" value="PRK09570.1"/>
    <property type="match status" value="1"/>
</dbReference>
<dbReference type="Pfam" id="PF01191">
    <property type="entry name" value="RNA_pol_Rpb5_C"/>
    <property type="match status" value="1"/>
</dbReference>
<dbReference type="SUPFAM" id="SSF55287">
    <property type="entry name" value="RPB5-like RNA polymerase subunit"/>
    <property type="match status" value="1"/>
</dbReference>
<protein>
    <recommendedName>
        <fullName evidence="1">DNA-directed RNA polymerase subunit Rpo5</fullName>
        <ecNumber evidence="1">2.7.7.6</ecNumber>
    </recommendedName>
    <alternativeName>
        <fullName evidence="1">DNA-directed RNA polymerase subunit H</fullName>
    </alternativeName>
</protein>
<accession>Q8ZYR0</accession>
<keyword id="KW-0963">Cytoplasm</keyword>
<keyword id="KW-0240">DNA-directed RNA polymerase</keyword>
<keyword id="KW-0548">Nucleotidyltransferase</keyword>
<keyword id="KW-1185">Reference proteome</keyword>
<keyword id="KW-0804">Transcription</keyword>
<keyword id="KW-0808">Transferase</keyword>
<organism>
    <name type="scientific">Pyrobaculum aerophilum (strain ATCC 51768 / DSM 7523 / JCM 9630 / CIP 104966 / NBRC 100827 / IM2)</name>
    <dbReference type="NCBI Taxonomy" id="178306"/>
    <lineage>
        <taxon>Archaea</taxon>
        <taxon>Thermoproteota</taxon>
        <taxon>Thermoprotei</taxon>
        <taxon>Thermoproteales</taxon>
        <taxon>Thermoproteaceae</taxon>
        <taxon>Pyrobaculum</taxon>
    </lineage>
</organism>
<evidence type="ECO:0000255" key="1">
    <source>
        <dbReference type="HAMAP-Rule" id="MF_00025"/>
    </source>
</evidence>
<sequence length="75" mass="8331">MSRISLGVKEVTVIPREEAKELLKRMKLRPWQLPWIRASDPLAQKAGAKPGDVLKIVRESPTAGEAVVYRLVVPG</sequence>
<feature type="chain" id="PRO_0000146099" description="DNA-directed RNA polymerase subunit Rpo5">
    <location>
        <begin position="1"/>
        <end position="75"/>
    </location>
</feature>
<proteinExistence type="inferred from homology"/>
<gene>
    <name evidence="1" type="primary">rpo5</name>
    <name evidence="1" type="synonym">rpoH</name>
    <name type="ordered locus">PAE0664</name>
</gene>
<reference key="1">
    <citation type="journal article" date="2002" name="Proc. Natl. Acad. Sci. U.S.A.">
        <title>Genome sequence of the hyperthermophilic crenarchaeon Pyrobaculum aerophilum.</title>
        <authorList>
            <person name="Fitz-Gibbon S.T."/>
            <person name="Ladner H."/>
            <person name="Kim U.-J."/>
            <person name="Stetter K.O."/>
            <person name="Simon M.I."/>
            <person name="Miller J.H."/>
        </authorList>
    </citation>
    <scope>NUCLEOTIDE SEQUENCE [LARGE SCALE GENOMIC DNA]</scope>
    <source>
        <strain>ATCC 51768 / DSM 7523 / JCM 9630 / CIP 104966 / NBRC 100827 / IM2</strain>
    </source>
</reference>
<name>RPO5_PYRAE</name>
<comment type="function">
    <text evidence="1">DNA-dependent RNA polymerase (RNAP) catalyzes the transcription of DNA into RNA using the four ribonucleoside triphosphates as substrates.</text>
</comment>
<comment type="catalytic activity">
    <reaction evidence="1">
        <text>RNA(n) + a ribonucleoside 5'-triphosphate = RNA(n+1) + diphosphate</text>
        <dbReference type="Rhea" id="RHEA:21248"/>
        <dbReference type="Rhea" id="RHEA-COMP:14527"/>
        <dbReference type="Rhea" id="RHEA-COMP:17342"/>
        <dbReference type="ChEBI" id="CHEBI:33019"/>
        <dbReference type="ChEBI" id="CHEBI:61557"/>
        <dbReference type="ChEBI" id="CHEBI:140395"/>
        <dbReference type="EC" id="2.7.7.6"/>
    </reaction>
</comment>
<comment type="subunit">
    <text evidence="1">Part of the RNA polymerase complex.</text>
</comment>
<comment type="subcellular location">
    <subcellularLocation>
        <location evidence="1">Cytoplasm</location>
    </subcellularLocation>
</comment>
<comment type="similarity">
    <text evidence="1">Belongs to the archaeal Rpo5/eukaryotic RPB5 RNA polymerase subunit family.</text>
</comment>